<feature type="chain" id="PRO_0000207494" description="Delta(14)-sterol reductase ERG24">
    <location>
        <begin position="1"/>
        <end position="438"/>
    </location>
</feature>
<feature type="topological domain" description="Lumenal" evidence="5">
    <location>
        <begin position="1"/>
        <end position="13"/>
    </location>
</feature>
<feature type="transmembrane region" description="Helical" evidence="2">
    <location>
        <begin position="14"/>
        <end position="34"/>
    </location>
</feature>
<feature type="topological domain" description="Cytoplasmic" evidence="9">
    <location>
        <begin position="35"/>
        <end position="71"/>
    </location>
</feature>
<feature type="transmembrane region" description="Helical" evidence="2">
    <location>
        <begin position="72"/>
        <end position="90"/>
    </location>
</feature>
<feature type="topological domain" description="Lumenal" evidence="9">
    <location>
        <begin position="91"/>
        <end position="109"/>
    </location>
</feature>
<feature type="transmembrane region" description="Helical" evidence="2">
    <location>
        <begin position="110"/>
        <end position="127"/>
    </location>
</feature>
<feature type="topological domain" description="Cytoplasmic" evidence="9">
    <location>
        <begin position="128"/>
        <end position="147"/>
    </location>
</feature>
<feature type="transmembrane region" description="Helical" evidence="2">
    <location>
        <begin position="148"/>
        <end position="172"/>
    </location>
</feature>
<feature type="topological domain" description="Lumenal" evidence="9">
    <location>
        <begin position="173"/>
        <end position="242"/>
    </location>
</feature>
<feature type="transmembrane region" description="Helical" evidence="2">
    <location>
        <begin position="243"/>
        <end position="263"/>
    </location>
</feature>
<feature type="topological domain" description="Cytoplasmic" evidence="9">
    <location>
        <begin position="264"/>
        <end position="308"/>
    </location>
</feature>
<feature type="transmembrane region" description="Helical" evidence="2">
    <location>
        <begin position="309"/>
        <end position="328"/>
    </location>
</feature>
<feature type="topological domain" description="Lumenal" evidence="9">
    <location>
        <begin position="329"/>
        <end position="368"/>
    </location>
</feature>
<feature type="transmembrane region" description="Helical" evidence="2">
    <location>
        <begin position="369"/>
        <end position="387"/>
    </location>
</feature>
<feature type="topological domain" description="Cytoplasmic" evidence="9">
    <location>
        <begin position="388"/>
        <end position="438"/>
    </location>
</feature>
<feature type="binding site" evidence="1">
    <location>
        <position position="335"/>
    </location>
    <ligand>
        <name>NADP(+)</name>
        <dbReference type="ChEBI" id="CHEBI:58349"/>
    </ligand>
</feature>
<feature type="binding site" evidence="1">
    <location>
        <position position="339"/>
    </location>
    <ligand>
        <name>NADP(+)</name>
        <dbReference type="ChEBI" id="CHEBI:58349"/>
    </ligand>
</feature>
<feature type="binding site" evidence="1">
    <location>
        <position position="358"/>
    </location>
    <ligand>
        <name>NADP(+)</name>
        <dbReference type="ChEBI" id="CHEBI:58349"/>
    </ligand>
</feature>
<feature type="binding site" evidence="1">
    <location>
        <position position="363"/>
    </location>
    <ligand>
        <name>NADP(+)</name>
        <dbReference type="ChEBI" id="CHEBI:58349"/>
    </ligand>
</feature>
<feature type="binding site" evidence="1">
    <location>
        <begin position="370"/>
        <end position="371"/>
    </location>
    <ligand>
        <name>NADP(+)</name>
        <dbReference type="ChEBI" id="CHEBI:58349"/>
    </ligand>
</feature>
<feature type="binding site" evidence="1">
    <location>
        <position position="410"/>
    </location>
    <ligand>
        <name>NADP(+)</name>
        <dbReference type="ChEBI" id="CHEBI:58349"/>
    </ligand>
</feature>
<feature type="binding site" evidence="1">
    <location>
        <begin position="414"/>
        <end position="418"/>
    </location>
    <ligand>
        <name>NADP(+)</name>
        <dbReference type="ChEBI" id="CHEBI:58349"/>
    </ligand>
</feature>
<feature type="binding site" evidence="1">
    <location>
        <position position="425"/>
    </location>
    <ligand>
        <name>NADP(+)</name>
        <dbReference type="ChEBI" id="CHEBI:58349"/>
    </ligand>
</feature>
<feature type="sequence conflict" description="In Ref. 2; AAB30203." evidence="9" ref="2">
    <original>L</original>
    <variation>S</variation>
    <location>
        <position position="253"/>
    </location>
</feature>
<keyword id="KW-0444">Lipid biosynthesis</keyword>
<keyword id="KW-0443">Lipid metabolism</keyword>
<keyword id="KW-0472">Membrane</keyword>
<keyword id="KW-0521">NADP</keyword>
<keyword id="KW-0560">Oxidoreductase</keyword>
<keyword id="KW-1185">Reference proteome</keyword>
<keyword id="KW-0752">Steroid biosynthesis</keyword>
<keyword id="KW-0753">Steroid metabolism</keyword>
<keyword id="KW-0756">Sterol biosynthesis</keyword>
<keyword id="KW-1207">Sterol metabolism</keyword>
<keyword id="KW-0812">Transmembrane</keyword>
<keyword id="KW-1133">Transmembrane helix</keyword>
<dbReference type="EC" id="1.3.1.70" evidence="10"/>
<dbReference type="EMBL" id="M99419">
    <property type="protein sequence ID" value="AAA18256.1"/>
    <property type="molecule type" value="Genomic_DNA"/>
</dbReference>
<dbReference type="EMBL" id="S69420">
    <property type="protein sequence ID" value="AAB30203.1"/>
    <property type="molecule type" value="Genomic_DNA"/>
</dbReference>
<dbReference type="EMBL" id="Z71556">
    <property type="protein sequence ID" value="CAA96192.1"/>
    <property type="molecule type" value="Genomic_DNA"/>
</dbReference>
<dbReference type="EMBL" id="BK006947">
    <property type="protein sequence ID" value="DAA10280.1"/>
    <property type="molecule type" value="Genomic_DNA"/>
</dbReference>
<dbReference type="PIR" id="S30769">
    <property type="entry name" value="S30769"/>
</dbReference>
<dbReference type="RefSeq" id="NP_014119.1">
    <property type="nucleotide sequence ID" value="NM_001183118.1"/>
</dbReference>
<dbReference type="SMR" id="P32462"/>
<dbReference type="BioGRID" id="35561">
    <property type="interactions" value="366"/>
</dbReference>
<dbReference type="DIP" id="DIP-5155N"/>
<dbReference type="FunCoup" id="P32462">
    <property type="interactions" value="600"/>
</dbReference>
<dbReference type="IntAct" id="P32462">
    <property type="interactions" value="22"/>
</dbReference>
<dbReference type="STRING" id="4932.YNL280C"/>
<dbReference type="iPTMnet" id="P32462"/>
<dbReference type="PaxDb" id="4932-YNL280C"/>
<dbReference type="PeptideAtlas" id="P32462"/>
<dbReference type="TopDownProteomics" id="P32462"/>
<dbReference type="EnsemblFungi" id="YNL280C_mRNA">
    <property type="protein sequence ID" value="YNL280C"/>
    <property type="gene ID" value="YNL280C"/>
</dbReference>
<dbReference type="GeneID" id="855441"/>
<dbReference type="KEGG" id="sce:YNL280C"/>
<dbReference type="AGR" id="SGD:S000005224"/>
<dbReference type="SGD" id="S000005224">
    <property type="gene designation" value="ERG24"/>
</dbReference>
<dbReference type="VEuPathDB" id="FungiDB:YNL280C"/>
<dbReference type="eggNOG" id="KOG1435">
    <property type="taxonomic scope" value="Eukaryota"/>
</dbReference>
<dbReference type="GeneTree" id="ENSGT00390000000417"/>
<dbReference type="HOGENOM" id="CLU_015631_0_3_1"/>
<dbReference type="InParanoid" id="P32462"/>
<dbReference type="OMA" id="EWCELRP"/>
<dbReference type="OrthoDB" id="10262235at2759"/>
<dbReference type="BioCyc" id="MetaCyc:YNL280C-MONOMER"/>
<dbReference type="BioCyc" id="YEAST:YNL280C-MONOMER"/>
<dbReference type="Reactome" id="R-SCE-191273">
    <property type="pathway name" value="Cholesterol biosynthesis"/>
</dbReference>
<dbReference type="Reactome" id="R-SCE-2995383">
    <property type="pathway name" value="Initiation of Nuclear Envelope (NE) Reformation"/>
</dbReference>
<dbReference type="Reactome" id="R-SCE-9013106">
    <property type="pathway name" value="RHOC GTPase cycle"/>
</dbReference>
<dbReference type="UniPathway" id="UPA00770">
    <property type="reaction ID" value="UER00755"/>
</dbReference>
<dbReference type="BioGRID-ORCS" id="855441">
    <property type="hits" value="0 hits in 10 CRISPR screens"/>
</dbReference>
<dbReference type="PRO" id="PR:P32462"/>
<dbReference type="Proteomes" id="UP000002311">
    <property type="component" value="Chromosome XIV"/>
</dbReference>
<dbReference type="RNAct" id="P32462">
    <property type="molecule type" value="protein"/>
</dbReference>
<dbReference type="GO" id="GO:0005783">
    <property type="term" value="C:endoplasmic reticulum"/>
    <property type="evidence" value="ECO:0007005"/>
    <property type="project" value="SGD"/>
</dbReference>
<dbReference type="GO" id="GO:0005789">
    <property type="term" value="C:endoplasmic reticulum membrane"/>
    <property type="evidence" value="ECO:0000318"/>
    <property type="project" value="GO_Central"/>
</dbReference>
<dbReference type="GO" id="GO:0050613">
    <property type="term" value="F:Delta14-sterol reductase activity"/>
    <property type="evidence" value="ECO:0000314"/>
    <property type="project" value="SGD"/>
</dbReference>
<dbReference type="GO" id="GO:0050661">
    <property type="term" value="F:NADP binding"/>
    <property type="evidence" value="ECO:0000250"/>
    <property type="project" value="UniProtKB"/>
</dbReference>
<dbReference type="GO" id="GO:0006696">
    <property type="term" value="P:ergosterol biosynthetic process"/>
    <property type="evidence" value="ECO:0000315"/>
    <property type="project" value="SGD"/>
</dbReference>
<dbReference type="FunFam" id="1.20.120.1630:FF:000009">
    <property type="entry name" value="C-14 sterol reductase"/>
    <property type="match status" value="1"/>
</dbReference>
<dbReference type="Gene3D" id="1.20.120.1630">
    <property type="match status" value="1"/>
</dbReference>
<dbReference type="InterPro" id="IPR001171">
    <property type="entry name" value="ERG24_DHCR-like"/>
</dbReference>
<dbReference type="InterPro" id="IPR018083">
    <property type="entry name" value="Sterol_reductase_CS"/>
</dbReference>
<dbReference type="PANTHER" id="PTHR21257">
    <property type="entry name" value="DELTA(14)-STEROL REDUCTASE"/>
    <property type="match status" value="1"/>
</dbReference>
<dbReference type="PANTHER" id="PTHR21257:SF52">
    <property type="entry name" value="DELTA(14)-STEROL REDUCTASE TM7SF2"/>
    <property type="match status" value="1"/>
</dbReference>
<dbReference type="Pfam" id="PF01222">
    <property type="entry name" value="ERG4_ERG24"/>
    <property type="match status" value="1"/>
</dbReference>
<dbReference type="PROSITE" id="PS01017">
    <property type="entry name" value="STEROL_REDUCT_1"/>
    <property type="match status" value="1"/>
</dbReference>
<dbReference type="PROSITE" id="PS01018">
    <property type="entry name" value="STEROL_REDUCT_2"/>
    <property type="match status" value="1"/>
</dbReference>
<accession>P32462</accession>
<accession>D6W0R4</accession>
<comment type="function">
    <text evidence="3 6 7">Delta(14)-sterol reductase; part of the third module of ergosterol biosynthesis pathway that includes the late steps of the pathway (PubMed:1418625, PubMed:8125337). ERG24 reduces the C14=C15 double bond of 4,4-dimethyl-cholesta-8,14,24-trienol to produce 4,4-dimethyl-cholesta-8,24-dienol (PubMed:1418625, PubMed:8125337). The third module or late pathway involves the ergosterol synthesis itself through consecutive reactions that mainly occur in the endoplasmic reticulum (ER) membrane. Firstly, the squalene synthase ERG9 catalyzes the condensation of 2 farnesyl pyrophosphate moieties to form squalene, which is the precursor of all steroids. Squalene synthase is crucial for balancing the incorporation of farnesyl diphosphate (FPP) into sterol and nonsterol isoprene synthesis. Secondly, the squalene epoxidase ERG1 catalyzes the stereospecific oxidation of squalene to (S)-2,3-epoxysqualene, which is considered to be a rate-limiting enzyme in steroid biosynthesis. Then, the lanosterol synthase ERG7 catalyzes the cyclization of (S)-2,3 oxidosqualene to lanosterol, a reaction that forms the sterol core. In the next steps, lanosterol is transformed to zymosterol through a complex process involving various demethylation, reduction and desaturation reactions. The lanosterol 14-alpha-demethylase ERG11 (also known as CYP51) catalyzes C14-demethylation of lanosterol to produce 4,4'-dimethyl cholesta-8,14,24-triene-3-beta-ol, which is critical for ergosterol biosynthesis. The C-14 reductase ERG24 reduces the C14=C15 double bond of 4,4-dimethyl-cholesta-8,14,24-trienol to produce 4,4-dimethyl-cholesta-8,24-dienol. 4,4-dimethyl-cholesta-8,24-dienol is substrate of the C-4 demethylation complex ERG25-ERG26-ERG27 in which ERG25 catalyzes the three-step monooxygenation required for the demethylation of 4,4-dimethyl and 4alpha-methylsterols, ERG26 catalyzes the oxidative decarboxylation that results in a reduction of the 3-beta-hydroxy group at the C-3 carbon to an oxo group, and ERG27 is responsible for the reduction of the keto group on the C-3. ERG28 has a role as a scaffold to help anchor ERG25, ERG26 and ERG27 to the endoplasmic reticulum and ERG29 regulates the activity of the iron-containing C4-methylsterol oxidase ERG25. Then, the sterol 24-C-methyltransferase ERG6 catalyzes the methyl transfer from S-adenosyl-methionine to the C-24 of zymosterol to form fecosterol. The C-8 sterol isomerase ERG2 catalyzes the reaction which results in unsaturation at C-7 in the B ring of sterols and thus converts fecosterol to episterol. The sterol-C5-desaturase ERG3 then catalyzes the introduction of a C-5 double bond in the B ring to produce 5-dehydroepisterol. The C-22 sterol desaturase ERG5 further converts 5-dehydroepisterol into ergosta-5,7,22,24(28)-tetraen-3beta-ol by forming the C-22(23) double bond in the sterol side chain. Finally, ergosta-5,7,22,24(28)-tetraen-3beta-ol is substrate of the C-24(28) sterol reductase ERG4 to produce ergosterol (PubMed:32679672).</text>
</comment>
<comment type="catalytic activity">
    <reaction evidence="10">
        <text>4,4-dimethyl-5alpha-cholesta-8,24-dien-3beta-ol + NADP(+) = 4,4-dimethyl-5alpha-cholesta-8,14,24-trien-3beta-ol + NADPH + H(+)</text>
        <dbReference type="Rhea" id="RHEA:18561"/>
        <dbReference type="ChEBI" id="CHEBI:15378"/>
        <dbReference type="ChEBI" id="CHEBI:17813"/>
        <dbReference type="ChEBI" id="CHEBI:18364"/>
        <dbReference type="ChEBI" id="CHEBI:57783"/>
        <dbReference type="ChEBI" id="CHEBI:58349"/>
        <dbReference type="EC" id="1.3.1.70"/>
    </reaction>
    <physiologicalReaction direction="right-to-left" evidence="10">
        <dbReference type="Rhea" id="RHEA:18563"/>
    </physiologicalReaction>
</comment>
<comment type="activity regulation">
    <text evidence="6">Inhibited by the morpholine antifungal drug fenpropimorph.</text>
</comment>
<comment type="pathway">
    <text evidence="3 6">Steroid biosynthesis; zymosterol biosynthesis; zymosterol from lanosterol: step 2/6.</text>
</comment>
<comment type="interaction">
    <interactant intactId="EBI-6502">
        <id>P32462</id>
    </interactant>
    <interactant intactId="EBI-6550">
        <id>P32352</id>
        <label>ERG2</label>
    </interactant>
    <organismsDiffer>false</organismsDiffer>
    <experiments>3</experiments>
</comment>
<comment type="interaction">
    <interactant intactId="EBI-6502">
        <id>P32462</id>
    </interactant>
    <interactant intactId="EBI-6514">
        <id>P53199</id>
        <label>ERG26</label>
    </interactant>
    <organismsDiffer>false</organismsDiffer>
    <experiments>3</experiments>
</comment>
<comment type="subcellular location">
    <subcellularLocation>
        <location evidence="5">Membrane</location>
        <topology evidence="5">Multi-pass membrane protein</topology>
    </subcellularLocation>
</comment>
<comment type="disruption phenotype">
    <text evidence="3">Leads to the accumulation of ergosta-8,14-dienol as the major sterol.</text>
</comment>
<comment type="miscellaneous">
    <text evidence="4">Present with 1600 molecules/cell in log phase SD medium.</text>
</comment>
<comment type="similarity">
    <text evidence="9">Belongs to the ERG4/ERG24 family.</text>
</comment>
<gene>
    <name evidence="8" type="primary">ERG24</name>
    <name type="ordered locus">YNL280C</name>
    <name type="ORF">N0593</name>
</gene>
<proteinExistence type="evidence at protein level"/>
<protein>
    <recommendedName>
        <fullName evidence="8">Delta(14)-sterol reductase ERG24</fullName>
        <ecNumber evidence="10">1.3.1.70</ecNumber>
    </recommendedName>
    <alternativeName>
        <fullName evidence="8">C-14 sterol reductase ERG24</fullName>
    </alternativeName>
    <alternativeName>
        <fullName evidence="8">Ergosterol biosynthetic protein 24</fullName>
    </alternativeName>
    <alternativeName>
        <fullName evidence="8">Sterol C14-reductase ERG24</fullName>
    </alternativeName>
</protein>
<sequence>MVSALNPRTTEFEFGGLIGALGISIGLPVFTIILNQMIRPDYFIKGFFQNFDIVELWNGIKPLRYYLGNRELWTVYCLWYGILAVLDVILPGRVMKGVQLRDGSKLSYKINGIAMSTTLVLVLAIRWKLTDGQLPELQYLYENHVSLCIISILFSFFLATYCYVASFIPLIFKKNGNGKREKILALGGNSGNIIYDWFIGRELNPRLGPLDIKMFSELRPGMLLWLLINLSCLHHHYLKTGKINDALVLVNFLQGFYIFDGVLNEEGVLTMMDITTDGFGFMLAFGDLSLVPFTYSLQARYLSVSPVELGWVKVVGILAIMFLGFHIFHSANKQKSEFRQGKLENLKSIQTKRGTKLLCDGWWAKSQHINYFGDWLISLSWCLATWFQTPLTYYYSLYFATLLLHRQQRDEHKCRLKYGENWEEYERKVPYKIIPYVY</sequence>
<evidence type="ECO:0000250" key="1">
    <source>
        <dbReference type="UniProtKB" id="G4SW86"/>
    </source>
</evidence>
<evidence type="ECO:0000255" key="2"/>
<evidence type="ECO:0000269" key="3">
    <source>
    </source>
</evidence>
<evidence type="ECO:0000269" key="4">
    <source>
    </source>
</evidence>
<evidence type="ECO:0000269" key="5">
    <source>
    </source>
</evidence>
<evidence type="ECO:0000269" key="6">
    <source>
    </source>
</evidence>
<evidence type="ECO:0000303" key="7">
    <source>
    </source>
</evidence>
<evidence type="ECO:0000303" key="8">
    <source>
    </source>
</evidence>
<evidence type="ECO:0000305" key="9"/>
<evidence type="ECO:0000305" key="10">
    <source>
    </source>
</evidence>
<organism>
    <name type="scientific">Saccharomyces cerevisiae (strain ATCC 204508 / S288c)</name>
    <name type="common">Baker's yeast</name>
    <dbReference type="NCBI Taxonomy" id="559292"/>
    <lineage>
        <taxon>Eukaryota</taxon>
        <taxon>Fungi</taxon>
        <taxon>Dikarya</taxon>
        <taxon>Ascomycota</taxon>
        <taxon>Saccharomycotina</taxon>
        <taxon>Saccharomycetes</taxon>
        <taxon>Saccharomycetales</taxon>
        <taxon>Saccharomycetaceae</taxon>
        <taxon>Saccharomyces</taxon>
    </lineage>
</organism>
<name>ERG24_YEAST</name>
<reference key="1">
    <citation type="journal article" date="1992" name="DNA Cell Biol.">
        <title>Cloning, sequencing, and disruption of the gene encoding sterol C-14 reductase in Saccharomyces cerevisiae.</title>
        <authorList>
            <person name="Lorenz R.T."/>
            <person name="Parks L.W."/>
        </authorList>
    </citation>
    <scope>NUCLEOTIDE SEQUENCE [GENOMIC DNA]</scope>
    <scope>FUNCTION</scope>
    <scope>DISRUPTION PHENOTYPE</scope>
    <scope>PATHWAY</scope>
</reference>
<reference key="2">
    <citation type="journal article" date="1994" name="Gene">
        <title>The identification of a gene family in the Saccharomyces cerevisiae ergosterol biosynthesis pathway.</title>
        <authorList>
            <person name="Lai M.H."/>
            <person name="Bard M."/>
            <person name="Pierson C.A."/>
            <person name="Alexander J.F."/>
            <person name="Goebl M."/>
            <person name="Carter G.T."/>
            <person name="Kirsch D.R."/>
        </authorList>
    </citation>
    <scope>NUCLEOTIDE SEQUENCE [GENOMIC DNA]</scope>
    <scope>FUNCTION</scope>
    <scope>ACTIVITY REGULATION</scope>
    <scope>PATHWAY</scope>
</reference>
<reference key="3">
    <citation type="journal article" date="1997" name="Nature">
        <title>The nucleotide sequence of Saccharomyces cerevisiae chromosome XIV and its evolutionary implications.</title>
        <authorList>
            <person name="Philippsen P."/>
            <person name="Kleine K."/>
            <person name="Poehlmann R."/>
            <person name="Duesterhoeft A."/>
            <person name="Hamberg K."/>
            <person name="Hegemann J.H."/>
            <person name="Obermaier B."/>
            <person name="Urrestarazu L.A."/>
            <person name="Aert R."/>
            <person name="Albermann K."/>
            <person name="Altmann R."/>
            <person name="Andre B."/>
            <person name="Baladron V."/>
            <person name="Ballesta J.P.G."/>
            <person name="Becam A.-M."/>
            <person name="Beinhauer J.D."/>
            <person name="Boskovic J."/>
            <person name="Buitrago M.J."/>
            <person name="Bussereau F."/>
            <person name="Coster F."/>
            <person name="Crouzet M."/>
            <person name="D'Angelo M."/>
            <person name="Dal Pero F."/>
            <person name="De Antoni A."/>
            <person name="del Rey F."/>
            <person name="Doignon F."/>
            <person name="Domdey H."/>
            <person name="Dubois E."/>
            <person name="Fiedler T.A."/>
            <person name="Fleig U."/>
            <person name="Floeth M."/>
            <person name="Fritz C."/>
            <person name="Gaillardin C."/>
            <person name="Garcia-Cantalejo J.M."/>
            <person name="Glansdorff N."/>
            <person name="Goffeau A."/>
            <person name="Gueldener U."/>
            <person name="Herbert C.J."/>
            <person name="Heumann K."/>
            <person name="Heuss-Neitzel D."/>
            <person name="Hilbert H."/>
            <person name="Hinni K."/>
            <person name="Iraqui Houssaini I."/>
            <person name="Jacquet M."/>
            <person name="Jimenez A."/>
            <person name="Jonniaux J.-L."/>
            <person name="Karpfinger-Hartl L."/>
            <person name="Lanfranchi G."/>
            <person name="Lepingle A."/>
            <person name="Levesque H."/>
            <person name="Lyck R."/>
            <person name="Maftahi M."/>
            <person name="Mallet L."/>
            <person name="Maurer C.T.C."/>
            <person name="Messenguy F."/>
            <person name="Mewes H.-W."/>
            <person name="Moestl D."/>
            <person name="Nasr F."/>
            <person name="Nicaud J.-M."/>
            <person name="Niedenthal R.K."/>
            <person name="Pandolfo D."/>
            <person name="Pierard A."/>
            <person name="Piravandi E."/>
            <person name="Planta R.J."/>
            <person name="Pohl T.M."/>
            <person name="Purnelle B."/>
            <person name="Rebischung C."/>
            <person name="Remacha M.A."/>
            <person name="Revuelta J.L."/>
            <person name="Rinke M."/>
            <person name="Saiz J.E."/>
            <person name="Sartorello F."/>
            <person name="Scherens B."/>
            <person name="Sen-Gupta M."/>
            <person name="Soler-Mira A."/>
            <person name="Urbanus J.H.M."/>
            <person name="Valle G."/>
            <person name="Van Dyck L."/>
            <person name="Verhasselt P."/>
            <person name="Vierendeels F."/>
            <person name="Vissers S."/>
            <person name="Voet M."/>
            <person name="Volckaert G."/>
            <person name="Wach A."/>
            <person name="Wambutt R."/>
            <person name="Wedler H."/>
            <person name="Zollner A."/>
            <person name="Hani J."/>
        </authorList>
    </citation>
    <scope>NUCLEOTIDE SEQUENCE [LARGE SCALE GENOMIC DNA]</scope>
    <source>
        <strain>ATCC 204508 / S288c</strain>
    </source>
</reference>
<reference key="4">
    <citation type="journal article" date="2014" name="G3 (Bethesda)">
        <title>The reference genome sequence of Saccharomyces cerevisiae: Then and now.</title>
        <authorList>
            <person name="Engel S.R."/>
            <person name="Dietrich F.S."/>
            <person name="Fisk D.G."/>
            <person name="Binkley G."/>
            <person name="Balakrishnan R."/>
            <person name="Costanzo M.C."/>
            <person name="Dwight S.S."/>
            <person name="Hitz B.C."/>
            <person name="Karra K."/>
            <person name="Nash R.S."/>
            <person name="Weng S."/>
            <person name="Wong E.D."/>
            <person name="Lloyd P."/>
            <person name="Skrzypek M.S."/>
            <person name="Miyasato S.R."/>
            <person name="Simison M."/>
            <person name="Cherry J.M."/>
        </authorList>
    </citation>
    <scope>GENOME REANNOTATION</scope>
    <source>
        <strain>ATCC 204508 / S288c</strain>
    </source>
</reference>
<reference key="5">
    <citation type="journal article" date="2003" name="Nature">
        <title>Global analysis of protein expression in yeast.</title>
        <authorList>
            <person name="Ghaemmaghami S."/>
            <person name="Huh W.-K."/>
            <person name="Bower K."/>
            <person name="Howson R.W."/>
            <person name="Belle A."/>
            <person name="Dephoure N."/>
            <person name="O'Shea E.K."/>
            <person name="Weissman J.S."/>
        </authorList>
    </citation>
    <scope>LEVEL OF PROTEIN EXPRESSION [LARGE SCALE ANALYSIS]</scope>
</reference>
<reference key="6">
    <citation type="journal article" date="2006" name="Proc. Natl. Acad. Sci. U.S.A.">
        <title>A global topology map of the Saccharomyces cerevisiae membrane proteome.</title>
        <authorList>
            <person name="Kim H."/>
            <person name="Melen K."/>
            <person name="Oesterberg M."/>
            <person name="von Heijne G."/>
        </authorList>
    </citation>
    <scope>TOPOLOGY [LARGE SCALE ANALYSIS]</scope>
    <source>
        <strain>ATCC 208353 / W303-1A</strain>
    </source>
</reference>
<reference key="7">
    <citation type="journal article" date="2012" name="Proc. Natl. Acad. Sci. U.S.A.">
        <title>N-terminal acetylome analyses and functional insights of the N-terminal acetyltransferase NatB.</title>
        <authorList>
            <person name="Van Damme P."/>
            <person name="Lasa M."/>
            <person name="Polevoda B."/>
            <person name="Gazquez C."/>
            <person name="Elosegui-Artola A."/>
            <person name="Kim D.S."/>
            <person name="De Juan-Pardo E."/>
            <person name="Demeyer K."/>
            <person name="Hole K."/>
            <person name="Larrea E."/>
            <person name="Timmerman E."/>
            <person name="Prieto J."/>
            <person name="Arnesen T."/>
            <person name="Sherman F."/>
            <person name="Gevaert K."/>
            <person name="Aldabe R."/>
        </authorList>
    </citation>
    <scope>IDENTIFICATION BY MASS SPECTROMETRY [LARGE SCALE ANALYSIS]</scope>
</reference>
<reference key="8">
    <citation type="journal article" date="2020" name="Genes (Basel)">
        <title>Regulation of ergosterol biosynthesis in Saccharomyces cerevisiae.</title>
        <authorList>
            <person name="Jorda T."/>
            <person name="Puig S."/>
        </authorList>
    </citation>
    <scope>REVIEW ON ERGOSTEROL BIOSYNTHESIS</scope>
</reference>